<reference key="1">
    <citation type="journal article" date="2007" name="BMC Genomics">
        <title>Comparative chloroplast genomics: analyses including new sequences from the angiosperms Nuphar advena and Ranunculus macranthus.</title>
        <authorList>
            <person name="Raubeson L.A."/>
            <person name="Peery R."/>
            <person name="Chumley T.W."/>
            <person name="Dziubek C."/>
            <person name="Fourcade H.M."/>
            <person name="Boore J.L."/>
            <person name="Jansen R.K."/>
        </authorList>
    </citation>
    <scope>NUCLEOTIDE SEQUENCE [LARGE SCALE GENOMIC DNA]</scope>
</reference>
<sequence>MFLLHEYDIFWAFLMISSVIPILAFIISGVLAPISEGPEKLSSYESGIEPIGDAWIQFRIRYYMFALVFVVFDVETVFLYPWAVSFDVLGVSVFIEALIFVLIPVVGSVYAWRKGALEWS</sequence>
<protein>
    <recommendedName>
        <fullName evidence="1">NAD(P)H-quinone oxidoreductase subunit 3, chloroplastic</fullName>
        <ecNumber evidence="1">7.1.1.-</ecNumber>
    </recommendedName>
    <alternativeName>
        <fullName evidence="1">NAD(P)H dehydrogenase subunit 3</fullName>
    </alternativeName>
    <alternativeName>
        <fullName evidence="1">NADH-plastoquinone oxidoreductase subunit 3</fullName>
    </alternativeName>
</protein>
<feature type="chain" id="PRO_0000362855" description="NAD(P)H-quinone oxidoreductase subunit 3, chloroplastic">
    <location>
        <begin position="1"/>
        <end position="120"/>
    </location>
</feature>
<feature type="transmembrane region" description="Helical" evidence="1">
    <location>
        <begin position="9"/>
        <end position="29"/>
    </location>
</feature>
<feature type="transmembrane region" description="Helical" evidence="1">
    <location>
        <begin position="64"/>
        <end position="84"/>
    </location>
</feature>
<feature type="transmembrane region" description="Helical" evidence="1">
    <location>
        <begin position="88"/>
        <end position="108"/>
    </location>
</feature>
<comment type="function">
    <text evidence="1">NDH shuttles electrons from NAD(P)H:plastoquinone, via FMN and iron-sulfur (Fe-S) centers, to quinones in the photosynthetic chain and possibly in a chloroplast respiratory chain. The immediate electron acceptor for the enzyme in this species is believed to be plastoquinone. Couples the redox reaction to proton translocation, and thus conserves the redox energy in a proton gradient.</text>
</comment>
<comment type="catalytic activity">
    <reaction evidence="1">
        <text>a plastoquinone + NADH + (n+1) H(+)(in) = a plastoquinol + NAD(+) + n H(+)(out)</text>
        <dbReference type="Rhea" id="RHEA:42608"/>
        <dbReference type="Rhea" id="RHEA-COMP:9561"/>
        <dbReference type="Rhea" id="RHEA-COMP:9562"/>
        <dbReference type="ChEBI" id="CHEBI:15378"/>
        <dbReference type="ChEBI" id="CHEBI:17757"/>
        <dbReference type="ChEBI" id="CHEBI:57540"/>
        <dbReference type="ChEBI" id="CHEBI:57945"/>
        <dbReference type="ChEBI" id="CHEBI:62192"/>
    </reaction>
</comment>
<comment type="catalytic activity">
    <reaction evidence="1">
        <text>a plastoquinone + NADPH + (n+1) H(+)(in) = a plastoquinol + NADP(+) + n H(+)(out)</text>
        <dbReference type="Rhea" id="RHEA:42612"/>
        <dbReference type="Rhea" id="RHEA-COMP:9561"/>
        <dbReference type="Rhea" id="RHEA-COMP:9562"/>
        <dbReference type="ChEBI" id="CHEBI:15378"/>
        <dbReference type="ChEBI" id="CHEBI:17757"/>
        <dbReference type="ChEBI" id="CHEBI:57783"/>
        <dbReference type="ChEBI" id="CHEBI:58349"/>
        <dbReference type="ChEBI" id="CHEBI:62192"/>
    </reaction>
</comment>
<comment type="subunit">
    <text evidence="1">NDH is composed of at least 16 different subunits, 5 of which are encoded in the nucleus.</text>
</comment>
<comment type="subcellular location">
    <subcellularLocation>
        <location evidence="1">Plastid</location>
        <location evidence="1">Chloroplast thylakoid membrane</location>
        <topology evidence="1">Multi-pass membrane protein</topology>
    </subcellularLocation>
</comment>
<comment type="similarity">
    <text evidence="1">Belongs to the complex I subunit 3 family.</text>
</comment>
<name>NU3C_NUPAD</name>
<gene>
    <name evidence="1" type="primary">ndhC</name>
</gene>
<keyword id="KW-0150">Chloroplast</keyword>
<keyword id="KW-0472">Membrane</keyword>
<keyword id="KW-0520">NAD</keyword>
<keyword id="KW-0521">NADP</keyword>
<keyword id="KW-0934">Plastid</keyword>
<keyword id="KW-0618">Plastoquinone</keyword>
<keyword id="KW-0874">Quinone</keyword>
<keyword id="KW-0793">Thylakoid</keyword>
<keyword id="KW-1278">Translocase</keyword>
<keyword id="KW-0812">Transmembrane</keyword>
<keyword id="KW-1133">Transmembrane helix</keyword>
<keyword id="KW-0813">Transport</keyword>
<evidence type="ECO:0000255" key="1">
    <source>
        <dbReference type="HAMAP-Rule" id="MF_01394"/>
    </source>
</evidence>
<dbReference type="EC" id="7.1.1.-" evidence="1"/>
<dbReference type="EMBL" id="DQ354691">
    <property type="protein sequence ID" value="ABC60463.1"/>
    <property type="molecule type" value="Genomic_DNA"/>
</dbReference>
<dbReference type="RefSeq" id="YP_001001539.1">
    <property type="nucleotide sequence ID" value="NC_008788.1"/>
</dbReference>
<dbReference type="SMR" id="A1XFW0"/>
<dbReference type="GeneID" id="4699569"/>
<dbReference type="GO" id="GO:0009535">
    <property type="term" value="C:chloroplast thylakoid membrane"/>
    <property type="evidence" value="ECO:0007669"/>
    <property type="project" value="UniProtKB-SubCell"/>
</dbReference>
<dbReference type="GO" id="GO:0030964">
    <property type="term" value="C:NADH dehydrogenase complex"/>
    <property type="evidence" value="ECO:0007669"/>
    <property type="project" value="TreeGrafter"/>
</dbReference>
<dbReference type="GO" id="GO:0008137">
    <property type="term" value="F:NADH dehydrogenase (ubiquinone) activity"/>
    <property type="evidence" value="ECO:0007669"/>
    <property type="project" value="InterPro"/>
</dbReference>
<dbReference type="GO" id="GO:0048038">
    <property type="term" value="F:quinone binding"/>
    <property type="evidence" value="ECO:0007669"/>
    <property type="project" value="UniProtKB-KW"/>
</dbReference>
<dbReference type="GO" id="GO:0019684">
    <property type="term" value="P:photosynthesis, light reaction"/>
    <property type="evidence" value="ECO:0007669"/>
    <property type="project" value="UniProtKB-UniRule"/>
</dbReference>
<dbReference type="FunFam" id="1.20.58.1610:FF:000001">
    <property type="entry name" value="NAD(P)H-quinone oxidoreductase subunit 3, chloroplastic"/>
    <property type="match status" value="1"/>
</dbReference>
<dbReference type="Gene3D" id="1.20.58.1610">
    <property type="entry name" value="NADH:ubiquinone/plastoquinone oxidoreductase, chain 3"/>
    <property type="match status" value="1"/>
</dbReference>
<dbReference type="HAMAP" id="MF_01394">
    <property type="entry name" value="NDH1_NuoA"/>
    <property type="match status" value="1"/>
</dbReference>
<dbReference type="InterPro" id="IPR023043">
    <property type="entry name" value="NAD(P)H_OxRDtase_bac/plastid"/>
</dbReference>
<dbReference type="InterPro" id="IPR000440">
    <property type="entry name" value="NADH_UbQ/plastoQ_OxRdtase_su3"/>
</dbReference>
<dbReference type="InterPro" id="IPR038430">
    <property type="entry name" value="NDAH_ubi_oxred_su3_sf"/>
</dbReference>
<dbReference type="PANTHER" id="PTHR11058">
    <property type="entry name" value="NADH-UBIQUINONE OXIDOREDUCTASE CHAIN 3"/>
    <property type="match status" value="1"/>
</dbReference>
<dbReference type="PANTHER" id="PTHR11058:SF9">
    <property type="entry name" value="NADH-UBIQUINONE OXIDOREDUCTASE CHAIN 3"/>
    <property type="match status" value="1"/>
</dbReference>
<dbReference type="Pfam" id="PF00507">
    <property type="entry name" value="Oxidored_q4"/>
    <property type="match status" value="1"/>
</dbReference>
<organism>
    <name type="scientific">Nuphar advena</name>
    <name type="common">Common spatterdock</name>
    <name type="synonym">Nuphar lutea subsp. advena</name>
    <dbReference type="NCBI Taxonomy" id="77108"/>
    <lineage>
        <taxon>Eukaryota</taxon>
        <taxon>Viridiplantae</taxon>
        <taxon>Streptophyta</taxon>
        <taxon>Embryophyta</taxon>
        <taxon>Tracheophyta</taxon>
        <taxon>Spermatophyta</taxon>
        <taxon>Magnoliopsida</taxon>
        <taxon>Nymphaeales</taxon>
        <taxon>Nymphaeaceae</taxon>
        <taxon>Nuphar</taxon>
    </lineage>
</organism>
<geneLocation type="chloroplast"/>
<accession>A1XFW0</accession>
<proteinExistence type="inferred from homology"/>